<comment type="function">
    <text evidence="1">This protein is involved in the repair of mismatches in DNA. It is required for dam-dependent methyl-directed DNA mismatch repair. May act as a 'molecular matchmaker', a protein that promotes the formation of a stable complex between two or more DNA-binding proteins in an ATP-dependent manner without itself being part of a final effector complex.</text>
</comment>
<comment type="similarity">
    <text evidence="1">Belongs to the DNA mismatch repair MutL/HexB family.</text>
</comment>
<keyword id="KW-0227">DNA damage</keyword>
<keyword id="KW-0234">DNA repair</keyword>
<name>MUTL_ENDTX</name>
<feature type="chain" id="PRO_1000096698" description="DNA mismatch repair protein MutL">
    <location>
        <begin position="1"/>
        <end position="595"/>
    </location>
</feature>
<evidence type="ECO:0000255" key="1">
    <source>
        <dbReference type="HAMAP-Rule" id="MF_00149"/>
    </source>
</evidence>
<dbReference type="EMBL" id="AP009510">
    <property type="protein sequence ID" value="BAG13959.1"/>
    <property type="molecule type" value="Genomic_DNA"/>
</dbReference>
<dbReference type="RefSeq" id="WP_015423485.1">
    <property type="nucleotide sequence ID" value="NC_020419.1"/>
</dbReference>
<dbReference type="SMR" id="B1H0C7"/>
<dbReference type="STRING" id="471821.TGRD_476"/>
<dbReference type="KEGG" id="rsd:TGRD_476"/>
<dbReference type="PATRIC" id="fig|471821.5.peg.769"/>
<dbReference type="HOGENOM" id="CLU_004131_4_1_0"/>
<dbReference type="Proteomes" id="UP000001691">
    <property type="component" value="Chromosome"/>
</dbReference>
<dbReference type="GO" id="GO:0032300">
    <property type="term" value="C:mismatch repair complex"/>
    <property type="evidence" value="ECO:0007669"/>
    <property type="project" value="InterPro"/>
</dbReference>
<dbReference type="GO" id="GO:0005524">
    <property type="term" value="F:ATP binding"/>
    <property type="evidence" value="ECO:0007669"/>
    <property type="project" value="InterPro"/>
</dbReference>
<dbReference type="GO" id="GO:0016887">
    <property type="term" value="F:ATP hydrolysis activity"/>
    <property type="evidence" value="ECO:0007669"/>
    <property type="project" value="InterPro"/>
</dbReference>
<dbReference type="GO" id="GO:0140664">
    <property type="term" value="F:ATP-dependent DNA damage sensor activity"/>
    <property type="evidence" value="ECO:0007669"/>
    <property type="project" value="InterPro"/>
</dbReference>
<dbReference type="GO" id="GO:0030983">
    <property type="term" value="F:mismatched DNA binding"/>
    <property type="evidence" value="ECO:0007669"/>
    <property type="project" value="InterPro"/>
</dbReference>
<dbReference type="GO" id="GO:0006298">
    <property type="term" value="P:mismatch repair"/>
    <property type="evidence" value="ECO:0007669"/>
    <property type="project" value="UniProtKB-UniRule"/>
</dbReference>
<dbReference type="CDD" id="cd16926">
    <property type="entry name" value="HATPase_MutL-MLH-PMS-like"/>
    <property type="match status" value="1"/>
</dbReference>
<dbReference type="CDD" id="cd00782">
    <property type="entry name" value="MutL_Trans"/>
    <property type="match status" value="1"/>
</dbReference>
<dbReference type="FunFam" id="3.30.565.10:FF:000003">
    <property type="entry name" value="DNA mismatch repair endonuclease MutL"/>
    <property type="match status" value="1"/>
</dbReference>
<dbReference type="Gene3D" id="3.30.230.10">
    <property type="match status" value="1"/>
</dbReference>
<dbReference type="Gene3D" id="3.30.565.10">
    <property type="entry name" value="Histidine kinase-like ATPase, C-terminal domain"/>
    <property type="match status" value="1"/>
</dbReference>
<dbReference type="Gene3D" id="3.30.1540.20">
    <property type="entry name" value="MutL, C-terminal domain, dimerisation subdomain"/>
    <property type="match status" value="1"/>
</dbReference>
<dbReference type="Gene3D" id="3.30.1370.100">
    <property type="entry name" value="MutL, C-terminal domain, regulatory subdomain"/>
    <property type="match status" value="1"/>
</dbReference>
<dbReference type="HAMAP" id="MF_00149">
    <property type="entry name" value="DNA_mis_repair"/>
    <property type="match status" value="1"/>
</dbReference>
<dbReference type="InterPro" id="IPR014762">
    <property type="entry name" value="DNA_mismatch_repair_CS"/>
</dbReference>
<dbReference type="InterPro" id="IPR020667">
    <property type="entry name" value="DNA_mismatch_repair_MutL"/>
</dbReference>
<dbReference type="InterPro" id="IPR013507">
    <property type="entry name" value="DNA_mismatch_S5_2-like"/>
</dbReference>
<dbReference type="InterPro" id="IPR036890">
    <property type="entry name" value="HATPase_C_sf"/>
</dbReference>
<dbReference type="InterPro" id="IPR002099">
    <property type="entry name" value="MutL/Mlh/PMS"/>
</dbReference>
<dbReference type="InterPro" id="IPR038973">
    <property type="entry name" value="MutL/Mlh/Pms-like"/>
</dbReference>
<dbReference type="InterPro" id="IPR014790">
    <property type="entry name" value="MutL_C"/>
</dbReference>
<dbReference type="InterPro" id="IPR042120">
    <property type="entry name" value="MutL_C_dimsub"/>
</dbReference>
<dbReference type="InterPro" id="IPR042121">
    <property type="entry name" value="MutL_C_regsub"/>
</dbReference>
<dbReference type="InterPro" id="IPR037198">
    <property type="entry name" value="MutL_C_sf"/>
</dbReference>
<dbReference type="InterPro" id="IPR020568">
    <property type="entry name" value="Ribosomal_Su5_D2-typ_SF"/>
</dbReference>
<dbReference type="InterPro" id="IPR014721">
    <property type="entry name" value="Ribsml_uS5_D2-typ_fold_subgr"/>
</dbReference>
<dbReference type="NCBIfam" id="TIGR00585">
    <property type="entry name" value="mutl"/>
    <property type="match status" value="1"/>
</dbReference>
<dbReference type="PANTHER" id="PTHR10073">
    <property type="entry name" value="DNA MISMATCH REPAIR PROTEIN MLH, PMS, MUTL"/>
    <property type="match status" value="1"/>
</dbReference>
<dbReference type="PANTHER" id="PTHR10073:SF12">
    <property type="entry name" value="DNA MISMATCH REPAIR PROTEIN MLH1"/>
    <property type="match status" value="1"/>
</dbReference>
<dbReference type="Pfam" id="PF01119">
    <property type="entry name" value="DNA_mis_repair"/>
    <property type="match status" value="1"/>
</dbReference>
<dbReference type="Pfam" id="PF13589">
    <property type="entry name" value="HATPase_c_3"/>
    <property type="match status" value="1"/>
</dbReference>
<dbReference type="Pfam" id="PF08676">
    <property type="entry name" value="MutL_C"/>
    <property type="match status" value="1"/>
</dbReference>
<dbReference type="SMART" id="SM01340">
    <property type="entry name" value="DNA_mis_repair"/>
    <property type="match status" value="1"/>
</dbReference>
<dbReference type="SMART" id="SM00853">
    <property type="entry name" value="MutL_C"/>
    <property type="match status" value="1"/>
</dbReference>
<dbReference type="SUPFAM" id="SSF55874">
    <property type="entry name" value="ATPase domain of HSP90 chaperone/DNA topoisomerase II/histidine kinase"/>
    <property type="match status" value="1"/>
</dbReference>
<dbReference type="SUPFAM" id="SSF118116">
    <property type="entry name" value="DNA mismatch repair protein MutL"/>
    <property type="match status" value="1"/>
</dbReference>
<dbReference type="SUPFAM" id="SSF54211">
    <property type="entry name" value="Ribosomal protein S5 domain 2-like"/>
    <property type="match status" value="1"/>
</dbReference>
<dbReference type="PROSITE" id="PS00058">
    <property type="entry name" value="DNA_MISMATCH_REPAIR_1"/>
    <property type="match status" value="1"/>
</dbReference>
<reference key="1">
    <citation type="journal article" date="2008" name="Proc. Natl. Acad. Sci. U.S.A.">
        <title>Complete genome of the uncultured termite group 1 bacteria in a single host protist cell.</title>
        <authorList>
            <person name="Hongoh Y."/>
            <person name="Sharma V.K."/>
            <person name="Prakash T."/>
            <person name="Noda S."/>
            <person name="Taylor T.D."/>
            <person name="Kudo T."/>
            <person name="Sakaki Y."/>
            <person name="Toyoda A."/>
            <person name="Hattori M."/>
            <person name="Ohkuma M."/>
        </authorList>
    </citation>
    <scope>NUCLEOTIDE SEQUENCE [LARGE SCALE GENOMIC DNA]</scope>
</reference>
<sequence>MPINILSQETVNKIAAGEVVERPLNAVKELVENSLDAFASSITVEIEEAGKKLIRVSDNGFGMDKKDLELSILRHATSKIDDFKDLMHIHSLGFRGEALASIAAVSNFAIKTRKKGENSGWKLSVAGAKDIKVMPWSGAEGTITEVKSLFFNTPARQKFLKSDSTERSRIINSLEETALANYDISFKIFSENKTVFSAAQTDSKTERIADILGKDFAKTLKNIKIDHPKISLDVYFTGRDNSLPNKKYQYLFVNSRPVNYPKRLMHCVYQSYKESIPRDKYPGILIYTDVDPSEIDVNIHPAKREVKFADENGIYDILFKALRNALMSQGHPEIKITYPPLDKEKSAKQEVEGSTAPRFPKIQQPVIYAREPKPKYNYASLKQTCSIDKYADVFAKQEELTPENFDSNIKVIGQVFDTYIIASNKGDLYIFDQHAAAERVRYEFYLSQMKSQTIKIQQMLMPENFDLSPSISELLKANINIFNELGISIEEFGQNSFRITAYPALLGNISMEQIVKTIISDIEDDKHAEIEQKRDKIIRSACRASIKAGDNVSFIEAKKLINDLFKCKQPFTCPHGRPTAYKISLNEIEKFFKRK</sequence>
<accession>B1H0C7</accession>
<gene>
    <name evidence="1" type="primary">mutL</name>
    <name type="ordered locus">TGRD_476</name>
</gene>
<proteinExistence type="inferred from homology"/>
<protein>
    <recommendedName>
        <fullName evidence="1">DNA mismatch repair protein MutL</fullName>
    </recommendedName>
</protein>
<organism>
    <name type="scientific">Endomicrobium trichonymphae</name>
    <dbReference type="NCBI Taxonomy" id="1408204"/>
    <lineage>
        <taxon>Bacteria</taxon>
        <taxon>Pseudomonadati</taxon>
        <taxon>Elusimicrobiota</taxon>
        <taxon>Endomicrobiia</taxon>
        <taxon>Endomicrobiales</taxon>
        <taxon>Endomicrobiaceae</taxon>
        <taxon>Candidatus Endomicrobiellum</taxon>
    </lineage>
</organism>